<protein>
    <recommendedName>
        <fullName>Protein 3</fullName>
    </recommendedName>
</protein>
<feature type="chain" id="PRO_0000391475" description="Protein 3">
    <location>
        <begin position="1"/>
        <end position="290"/>
    </location>
</feature>
<accession>Q68Y30</accession>
<dbReference type="EMBL" id="AB114138">
    <property type="protein sequence ID" value="BAD36832.1"/>
    <property type="molecule type" value="Genomic_RNA"/>
</dbReference>
<dbReference type="SMR" id="Q68Y30"/>
<dbReference type="KEGG" id="vg:7042935"/>
<dbReference type="Proteomes" id="UP000008154">
    <property type="component" value="Genome"/>
</dbReference>
<keyword id="KW-1185">Reference proteome</keyword>
<name>VP3_LBVAV</name>
<sequence>MSLKSAPYLSEISVSNGDSGIGFDGGCADPYAPSRVPSRRWDYSTKWDMKITGAAREFNLSKQPVLTGLINSMRMKTSLTHPEIHVVWRGLVPPAVCRDDVVVTLRFTPDRSEKMGLIAQHTHGMHLYMHHVFYPSHSIRVGPGEPLPWAVGFSVPDFSLDPNYTIAEVHVRLTGYFSELPEYDIQRDSELISIVPMEEHVTGYATSAPRIPNTAWVARGYKIGVNGNSLAKKIKFLQEIGVDIEALRMVGQLDNTLKKVSPRAIDGSPSAEAKSEAARLVNAHVKTLTA</sequence>
<proteinExistence type="predicted"/>
<organism>
    <name type="scientific">Lettuce big-vein associated virus (isolate Japan/Kagawa)</name>
    <name type="common">LBVaV</name>
    <dbReference type="NCBI Taxonomy" id="652962"/>
    <lineage>
        <taxon>Viruses</taxon>
        <taxon>Riboviria</taxon>
        <taxon>Orthornavirae</taxon>
        <taxon>Negarnaviricota</taxon>
        <taxon>Haploviricotina</taxon>
        <taxon>Monjiviricetes</taxon>
        <taxon>Mononegavirales</taxon>
        <taxon>Rhabdoviridae</taxon>
        <taxon>Betarhabdovirinae</taxon>
        <taxon>Varicosavirus</taxon>
        <taxon>Varicosavirus lactucae</taxon>
    </lineage>
</organism>
<organismHost>
    <name type="scientific">Lactuca sativa</name>
    <name type="common">Garden lettuce</name>
    <dbReference type="NCBI Taxonomy" id="4236"/>
</organismHost>
<organismHost>
    <name type="scientific">Sonchus asper</name>
    <name type="common">Spiny sowthistle</name>
    <name type="synonym">Sonchus oleraceus var. asper</name>
    <dbReference type="NCBI Taxonomy" id="50193"/>
</organismHost>
<organismHost>
    <name type="scientific">Sonchus oleraceus</name>
    <name type="common">Common sowthistle</name>
    <dbReference type="NCBI Taxonomy" id="50207"/>
</organismHost>
<reference key="1">
    <citation type="journal article" date="2004" name="J. Gen. Virol.">
        <title>Nucleotide sequence of RNA2 of Lettuce big-vein virus and evidence for a possible transcription termination/initiation strategy similar to that of rhabdoviruses.</title>
        <authorList>
            <person name="Sasaya T."/>
            <person name="Kusaba S."/>
            <person name="Ishikawa K."/>
            <person name="Koganezawa H."/>
        </authorList>
    </citation>
    <scope>NUCLEOTIDE SEQUENCE [GENOMIC RNA]</scope>
</reference>